<proteinExistence type="inferred from homology"/>
<accession>O77525</accession>
<gene>
    <name type="primary">B2M</name>
</gene>
<name>B2MG_LAGLA</name>
<organism>
    <name type="scientific">Lagothrix lagotricha</name>
    <name type="common">Brown woolly monkey</name>
    <name type="synonym">Humboldt's woolly monkey</name>
    <dbReference type="NCBI Taxonomy" id="9519"/>
    <lineage>
        <taxon>Eukaryota</taxon>
        <taxon>Metazoa</taxon>
        <taxon>Chordata</taxon>
        <taxon>Craniata</taxon>
        <taxon>Vertebrata</taxon>
        <taxon>Euteleostomi</taxon>
        <taxon>Mammalia</taxon>
        <taxon>Eutheria</taxon>
        <taxon>Euarchontoglires</taxon>
        <taxon>Primates</taxon>
        <taxon>Haplorrhini</taxon>
        <taxon>Platyrrhini</taxon>
        <taxon>Atelidae</taxon>
        <taxon>Atelinae</taxon>
        <taxon>Lagothrix</taxon>
    </lineage>
</organism>
<protein>
    <recommendedName>
        <fullName>Beta-2-microglobulin</fullName>
    </recommendedName>
</protein>
<evidence type="ECO:0000250" key="1"/>
<evidence type="ECO:0000255" key="2">
    <source>
        <dbReference type="PROSITE-ProRule" id="PRU00114"/>
    </source>
</evidence>
<evidence type="ECO:0000305" key="3"/>
<reference key="1">
    <citation type="journal article" date="1998" name="Immunogenetics">
        <title>Beta-2-microglobulin in neotropical primates (Platyrrhini).</title>
        <authorList>
            <person name="Canavez F.C."/>
            <person name="Ladasky J.J."/>
            <person name="Muniz J.A.P.C."/>
            <person name="Seuanez H.N."/>
            <person name="Parham P."/>
        </authorList>
    </citation>
    <scope>NUCLEOTIDE SEQUENCE [GENOMIC DNA]</scope>
    <source>
        <tissue>Blood</tissue>
    </source>
</reference>
<feature type="signal peptide" evidence="1">
    <location>
        <begin position="1"/>
        <end position="20"/>
    </location>
</feature>
<feature type="chain" id="PRO_0000018781" description="Beta-2-microglobulin">
    <location>
        <begin position="21"/>
        <end position="119"/>
    </location>
</feature>
<feature type="domain" description="Ig-like C1-type">
    <location>
        <begin position="25"/>
        <end position="114"/>
    </location>
</feature>
<feature type="disulfide bond" evidence="2">
    <location>
        <begin position="45"/>
        <end position="100"/>
    </location>
</feature>
<comment type="function">
    <text evidence="1">Component of the class I major histocompatibility complex (MHC). Involved in the presentation of peptide antigens to the immune system (By similarity).</text>
</comment>
<comment type="subunit">
    <text evidence="1">Heterodimer of an alpha chain and a beta chain. Beta-2-microglobulin is the beta-chain of major histocompatibility complex class I molecules (By similarity).</text>
</comment>
<comment type="subcellular location">
    <subcellularLocation>
        <location evidence="1">Secreted</location>
    </subcellularLocation>
</comment>
<comment type="similarity">
    <text evidence="3">Belongs to the beta-2-microglobulin family.</text>
</comment>
<keyword id="KW-1015">Disulfide bond</keyword>
<keyword id="KW-0391">Immunity</keyword>
<keyword id="KW-0393">Immunoglobulin domain</keyword>
<keyword id="KW-0490">MHC I</keyword>
<keyword id="KW-0964">Secreted</keyword>
<keyword id="KW-0732">Signal</keyword>
<dbReference type="EMBL" id="AF032054">
    <property type="protein sequence ID" value="AAC52095.1"/>
    <property type="molecule type" value="Genomic_DNA"/>
</dbReference>
<dbReference type="EMBL" id="AF032053">
    <property type="protein sequence ID" value="AAC52095.1"/>
    <property type="status" value="JOINED"/>
    <property type="molecule type" value="Genomic_DNA"/>
</dbReference>
<dbReference type="SMR" id="O77525"/>
<dbReference type="GO" id="GO:0005576">
    <property type="term" value="C:extracellular region"/>
    <property type="evidence" value="ECO:0007669"/>
    <property type="project" value="UniProtKB-SubCell"/>
</dbReference>
<dbReference type="GO" id="GO:0042612">
    <property type="term" value="C:MHC class I protein complex"/>
    <property type="evidence" value="ECO:0007669"/>
    <property type="project" value="UniProtKB-KW"/>
</dbReference>
<dbReference type="GO" id="GO:0002474">
    <property type="term" value="P:antigen processing and presentation of peptide antigen via MHC class I"/>
    <property type="evidence" value="ECO:0007669"/>
    <property type="project" value="UniProtKB-KW"/>
</dbReference>
<dbReference type="GO" id="GO:0006955">
    <property type="term" value="P:immune response"/>
    <property type="evidence" value="ECO:0007669"/>
    <property type="project" value="InterPro"/>
</dbReference>
<dbReference type="CDD" id="cd05770">
    <property type="entry name" value="IgC1_beta2m"/>
    <property type="match status" value="1"/>
</dbReference>
<dbReference type="FunFam" id="2.60.40.10:FF:001005">
    <property type="entry name" value="Beta-2-microglobulin"/>
    <property type="match status" value="1"/>
</dbReference>
<dbReference type="Gene3D" id="2.60.40.10">
    <property type="entry name" value="Immunoglobulins"/>
    <property type="match status" value="1"/>
</dbReference>
<dbReference type="InterPro" id="IPR015707">
    <property type="entry name" value="B2Microglobulin"/>
</dbReference>
<dbReference type="InterPro" id="IPR007110">
    <property type="entry name" value="Ig-like_dom"/>
</dbReference>
<dbReference type="InterPro" id="IPR036179">
    <property type="entry name" value="Ig-like_dom_sf"/>
</dbReference>
<dbReference type="InterPro" id="IPR013783">
    <property type="entry name" value="Ig-like_fold"/>
</dbReference>
<dbReference type="InterPro" id="IPR003006">
    <property type="entry name" value="Ig/MHC_CS"/>
</dbReference>
<dbReference type="InterPro" id="IPR003597">
    <property type="entry name" value="Ig_C1-set"/>
</dbReference>
<dbReference type="InterPro" id="IPR050160">
    <property type="entry name" value="MHC/Immunoglobulin"/>
</dbReference>
<dbReference type="PANTHER" id="PTHR19944:SF62">
    <property type="entry name" value="BETA-2-MICROGLOBULIN"/>
    <property type="match status" value="1"/>
</dbReference>
<dbReference type="PANTHER" id="PTHR19944">
    <property type="entry name" value="MHC CLASS II-RELATED"/>
    <property type="match status" value="1"/>
</dbReference>
<dbReference type="Pfam" id="PF07654">
    <property type="entry name" value="C1-set"/>
    <property type="match status" value="1"/>
</dbReference>
<dbReference type="SMART" id="SM00407">
    <property type="entry name" value="IGc1"/>
    <property type="match status" value="1"/>
</dbReference>
<dbReference type="SUPFAM" id="SSF48726">
    <property type="entry name" value="Immunoglobulin"/>
    <property type="match status" value="1"/>
</dbReference>
<dbReference type="PROSITE" id="PS50835">
    <property type="entry name" value="IG_LIKE"/>
    <property type="match status" value="1"/>
</dbReference>
<dbReference type="PROSITE" id="PS00290">
    <property type="entry name" value="IG_MHC"/>
    <property type="match status" value="1"/>
</dbReference>
<sequence>MARSVVVALLVLLSLSGLEAIQHAPKIQVYSRHPAENGKPNFLNCYVSGFHPSDIEVDLLKNGKKIEKVEHSDLSFSKDWSFYLLYYTEFTPNEKDEYACRVSHVTFPTPKTVKWDRTM</sequence>